<protein>
    <recommendedName>
        <fullName evidence="2">D-alanine--D-alanine ligase</fullName>
        <ecNumber evidence="2">6.3.2.4</ecNumber>
    </recommendedName>
    <alternativeName>
        <fullName evidence="2">D-Ala-D-Ala ligase</fullName>
    </alternativeName>
    <alternativeName>
        <fullName evidence="2">D-alanylalanine synthetase</fullName>
    </alternativeName>
</protein>
<gene>
    <name evidence="2" type="primary">ddl</name>
    <name type="ordered locus">M446_0922</name>
</gene>
<proteinExistence type="inferred from homology"/>
<name>DDL_METS4</name>
<dbReference type="EC" id="6.3.2.4" evidence="2"/>
<dbReference type="EMBL" id="CP000943">
    <property type="protein sequence ID" value="ACA15471.1"/>
    <property type="molecule type" value="Genomic_DNA"/>
</dbReference>
<dbReference type="RefSeq" id="WP_012330888.1">
    <property type="nucleotide sequence ID" value="NC_010511.1"/>
</dbReference>
<dbReference type="SMR" id="B0UB90"/>
<dbReference type="STRING" id="426117.M446_0922"/>
<dbReference type="KEGG" id="met:M446_0922"/>
<dbReference type="eggNOG" id="COG1181">
    <property type="taxonomic scope" value="Bacteria"/>
</dbReference>
<dbReference type="HOGENOM" id="CLU_039268_0_0_5"/>
<dbReference type="UniPathway" id="UPA00219"/>
<dbReference type="GO" id="GO:0005829">
    <property type="term" value="C:cytosol"/>
    <property type="evidence" value="ECO:0007669"/>
    <property type="project" value="TreeGrafter"/>
</dbReference>
<dbReference type="GO" id="GO:0005524">
    <property type="term" value="F:ATP binding"/>
    <property type="evidence" value="ECO:0007669"/>
    <property type="project" value="UniProtKB-KW"/>
</dbReference>
<dbReference type="GO" id="GO:0008716">
    <property type="term" value="F:D-alanine-D-alanine ligase activity"/>
    <property type="evidence" value="ECO:0007669"/>
    <property type="project" value="UniProtKB-UniRule"/>
</dbReference>
<dbReference type="GO" id="GO:0046872">
    <property type="term" value="F:metal ion binding"/>
    <property type="evidence" value="ECO:0007669"/>
    <property type="project" value="UniProtKB-KW"/>
</dbReference>
<dbReference type="GO" id="GO:0071555">
    <property type="term" value="P:cell wall organization"/>
    <property type="evidence" value="ECO:0007669"/>
    <property type="project" value="UniProtKB-KW"/>
</dbReference>
<dbReference type="GO" id="GO:0009252">
    <property type="term" value="P:peptidoglycan biosynthetic process"/>
    <property type="evidence" value="ECO:0007669"/>
    <property type="project" value="UniProtKB-UniRule"/>
</dbReference>
<dbReference type="GO" id="GO:0008360">
    <property type="term" value="P:regulation of cell shape"/>
    <property type="evidence" value="ECO:0007669"/>
    <property type="project" value="UniProtKB-KW"/>
</dbReference>
<dbReference type="Gene3D" id="3.40.50.20">
    <property type="match status" value="1"/>
</dbReference>
<dbReference type="Gene3D" id="3.30.1490.20">
    <property type="entry name" value="ATP-grasp fold, A domain"/>
    <property type="match status" value="1"/>
</dbReference>
<dbReference type="Gene3D" id="3.30.470.20">
    <property type="entry name" value="ATP-grasp fold, B domain"/>
    <property type="match status" value="1"/>
</dbReference>
<dbReference type="HAMAP" id="MF_00047">
    <property type="entry name" value="Dala_Dala_lig"/>
    <property type="match status" value="1"/>
</dbReference>
<dbReference type="InterPro" id="IPR011761">
    <property type="entry name" value="ATP-grasp"/>
</dbReference>
<dbReference type="InterPro" id="IPR013815">
    <property type="entry name" value="ATP_grasp_subdomain_1"/>
</dbReference>
<dbReference type="InterPro" id="IPR000291">
    <property type="entry name" value="D-Ala_lig_Van_CS"/>
</dbReference>
<dbReference type="InterPro" id="IPR005905">
    <property type="entry name" value="D_ala_D_ala"/>
</dbReference>
<dbReference type="InterPro" id="IPR011095">
    <property type="entry name" value="Dala_Dala_lig_C"/>
</dbReference>
<dbReference type="InterPro" id="IPR011127">
    <property type="entry name" value="Dala_Dala_lig_N"/>
</dbReference>
<dbReference type="InterPro" id="IPR016185">
    <property type="entry name" value="PreATP-grasp_dom_sf"/>
</dbReference>
<dbReference type="NCBIfam" id="TIGR01205">
    <property type="entry name" value="D_ala_D_alaTIGR"/>
    <property type="match status" value="1"/>
</dbReference>
<dbReference type="NCBIfam" id="NF002528">
    <property type="entry name" value="PRK01966.1-4"/>
    <property type="match status" value="1"/>
</dbReference>
<dbReference type="PANTHER" id="PTHR23132">
    <property type="entry name" value="D-ALANINE--D-ALANINE LIGASE"/>
    <property type="match status" value="1"/>
</dbReference>
<dbReference type="PANTHER" id="PTHR23132:SF25">
    <property type="entry name" value="D-ALANINE--D-ALANINE LIGASE A"/>
    <property type="match status" value="1"/>
</dbReference>
<dbReference type="Pfam" id="PF07478">
    <property type="entry name" value="Dala_Dala_lig_C"/>
    <property type="match status" value="1"/>
</dbReference>
<dbReference type="Pfam" id="PF01820">
    <property type="entry name" value="Dala_Dala_lig_N"/>
    <property type="match status" value="1"/>
</dbReference>
<dbReference type="PIRSF" id="PIRSF039102">
    <property type="entry name" value="Ddl/VanB"/>
    <property type="match status" value="1"/>
</dbReference>
<dbReference type="SUPFAM" id="SSF56059">
    <property type="entry name" value="Glutathione synthetase ATP-binding domain-like"/>
    <property type="match status" value="1"/>
</dbReference>
<dbReference type="SUPFAM" id="SSF52440">
    <property type="entry name" value="PreATP-grasp domain"/>
    <property type="match status" value="1"/>
</dbReference>
<dbReference type="PROSITE" id="PS50975">
    <property type="entry name" value="ATP_GRASP"/>
    <property type="match status" value="1"/>
</dbReference>
<dbReference type="PROSITE" id="PS00843">
    <property type="entry name" value="DALA_DALA_LIGASE_1"/>
    <property type="match status" value="1"/>
</dbReference>
<dbReference type="PROSITE" id="PS00844">
    <property type="entry name" value="DALA_DALA_LIGASE_2"/>
    <property type="match status" value="1"/>
</dbReference>
<feature type="chain" id="PRO_0000341133" description="D-alanine--D-alanine ligase">
    <location>
        <begin position="1"/>
        <end position="382"/>
    </location>
</feature>
<feature type="domain" description="ATP-grasp" evidence="2">
    <location>
        <begin position="139"/>
        <end position="348"/>
    </location>
</feature>
<feature type="binding site" evidence="2">
    <location>
        <begin position="168"/>
        <end position="223"/>
    </location>
    <ligand>
        <name>ATP</name>
        <dbReference type="ChEBI" id="CHEBI:30616"/>
    </ligand>
</feature>
<feature type="binding site" evidence="2">
    <location>
        <position position="300"/>
    </location>
    <ligand>
        <name>Mg(2+)</name>
        <dbReference type="ChEBI" id="CHEBI:18420"/>
        <label>1</label>
    </ligand>
</feature>
<feature type="binding site" evidence="2">
    <location>
        <position position="315"/>
    </location>
    <ligand>
        <name>Mg(2+)</name>
        <dbReference type="ChEBI" id="CHEBI:18420"/>
        <label>1</label>
    </ligand>
</feature>
<feature type="binding site" evidence="2">
    <location>
        <position position="315"/>
    </location>
    <ligand>
        <name>Mg(2+)</name>
        <dbReference type="ChEBI" id="CHEBI:18420"/>
        <label>2</label>
    </ligand>
</feature>
<feature type="binding site" evidence="2">
    <location>
        <position position="317"/>
    </location>
    <ligand>
        <name>Mg(2+)</name>
        <dbReference type="ChEBI" id="CHEBI:18420"/>
        <label>2</label>
    </ligand>
</feature>
<reference key="1">
    <citation type="submission" date="2008-02" db="EMBL/GenBank/DDBJ databases">
        <title>Complete sequence of chromosome of Methylobacterium sp. 4-46.</title>
        <authorList>
            <consortium name="US DOE Joint Genome Institute"/>
            <person name="Copeland A."/>
            <person name="Lucas S."/>
            <person name="Lapidus A."/>
            <person name="Glavina del Rio T."/>
            <person name="Dalin E."/>
            <person name="Tice H."/>
            <person name="Bruce D."/>
            <person name="Goodwin L."/>
            <person name="Pitluck S."/>
            <person name="Chertkov O."/>
            <person name="Brettin T."/>
            <person name="Detter J.C."/>
            <person name="Han C."/>
            <person name="Kuske C.R."/>
            <person name="Schmutz J."/>
            <person name="Larimer F."/>
            <person name="Land M."/>
            <person name="Hauser L."/>
            <person name="Kyrpides N."/>
            <person name="Ivanova N."/>
            <person name="Marx C.J."/>
            <person name="Richardson P."/>
        </authorList>
    </citation>
    <scope>NUCLEOTIDE SEQUENCE [LARGE SCALE GENOMIC DNA]</scope>
    <source>
        <strain>4-46</strain>
    </source>
</reference>
<comment type="function">
    <text evidence="2">Cell wall formation.</text>
</comment>
<comment type="catalytic activity">
    <reaction evidence="2">
        <text>2 D-alanine + ATP = D-alanyl-D-alanine + ADP + phosphate + H(+)</text>
        <dbReference type="Rhea" id="RHEA:11224"/>
        <dbReference type="ChEBI" id="CHEBI:15378"/>
        <dbReference type="ChEBI" id="CHEBI:30616"/>
        <dbReference type="ChEBI" id="CHEBI:43474"/>
        <dbReference type="ChEBI" id="CHEBI:57416"/>
        <dbReference type="ChEBI" id="CHEBI:57822"/>
        <dbReference type="ChEBI" id="CHEBI:456216"/>
        <dbReference type="EC" id="6.3.2.4"/>
    </reaction>
</comment>
<comment type="cofactor">
    <cofactor evidence="1">
        <name>Mg(2+)</name>
        <dbReference type="ChEBI" id="CHEBI:18420"/>
    </cofactor>
    <cofactor evidence="1">
        <name>Mn(2+)</name>
        <dbReference type="ChEBI" id="CHEBI:29035"/>
    </cofactor>
    <text evidence="1">Binds 2 magnesium or manganese ions per subunit.</text>
</comment>
<comment type="pathway">
    <text evidence="2">Cell wall biogenesis; peptidoglycan biosynthesis.</text>
</comment>
<comment type="subcellular location">
    <subcellularLocation>
        <location evidence="2">Cytoplasm</location>
    </subcellularLocation>
</comment>
<comment type="similarity">
    <text evidence="2">Belongs to the D-alanine--D-alanine ligase family.</text>
</comment>
<sequence>MRRNVALLFGGRSAEHEVSIVSAGNVARALDPDRYAVTPIAIDKETGAWRLCPPLAPGEAPAMVREGPRVAFLPGGGGRLAVLGETASVSEPFDVVVPVLHGPNGEDGTVQGALDLAGVPYVGSGVIGSAAAMDKDVAKRLMRDAGLPIVPYLVAGPRRGVAYTEAVEALESRTLFVKPANMGSSVGVSRVADAGQFDQALAHAFAYDEKILIERAVPRAREIEFAVLETAEGEVRVSPPGEIAPAAAHGFYGYDAKYVDPDGAALLIPASLAPALAERMGGLAARAFEALACAGLARVDLFLDPDDPEGIFVNEVNTLPGFTAISMYPKLWDAAGLAPPALMDALIAHALARHARAVATGRAAPRSAADAAWAPMRESISR</sequence>
<evidence type="ECO:0000250" key="1"/>
<evidence type="ECO:0000255" key="2">
    <source>
        <dbReference type="HAMAP-Rule" id="MF_00047"/>
    </source>
</evidence>
<keyword id="KW-0067">ATP-binding</keyword>
<keyword id="KW-0133">Cell shape</keyword>
<keyword id="KW-0961">Cell wall biogenesis/degradation</keyword>
<keyword id="KW-0963">Cytoplasm</keyword>
<keyword id="KW-0436">Ligase</keyword>
<keyword id="KW-0460">Magnesium</keyword>
<keyword id="KW-0464">Manganese</keyword>
<keyword id="KW-0479">Metal-binding</keyword>
<keyword id="KW-0547">Nucleotide-binding</keyword>
<keyword id="KW-0573">Peptidoglycan synthesis</keyword>
<accession>B0UB90</accession>
<organism>
    <name type="scientific">Methylobacterium sp. (strain 4-46)</name>
    <dbReference type="NCBI Taxonomy" id="426117"/>
    <lineage>
        <taxon>Bacteria</taxon>
        <taxon>Pseudomonadati</taxon>
        <taxon>Pseudomonadota</taxon>
        <taxon>Alphaproteobacteria</taxon>
        <taxon>Hyphomicrobiales</taxon>
        <taxon>Methylobacteriaceae</taxon>
        <taxon>Methylobacterium</taxon>
    </lineage>
</organism>